<evidence type="ECO:0000255" key="1">
    <source>
        <dbReference type="HAMAP-Rule" id="MF_00653"/>
    </source>
</evidence>
<gene>
    <name evidence="1" type="primary">pqqB</name>
    <name type="ordered locus">PSPPH_4705</name>
</gene>
<proteinExistence type="inferred from homology"/>
<dbReference type="EMBL" id="CP000058">
    <property type="protein sequence ID" value="AAZ33417.1"/>
    <property type="molecule type" value="Genomic_DNA"/>
</dbReference>
<dbReference type="RefSeq" id="WP_004654742.1">
    <property type="nucleotide sequence ID" value="NC_005773.3"/>
</dbReference>
<dbReference type="SMR" id="Q48CT6"/>
<dbReference type="KEGG" id="psp:PSPPH_4705"/>
<dbReference type="eggNOG" id="COG1235">
    <property type="taxonomic scope" value="Bacteria"/>
</dbReference>
<dbReference type="HOGENOM" id="CLU_061120_0_0_6"/>
<dbReference type="UniPathway" id="UPA00539"/>
<dbReference type="Proteomes" id="UP000000551">
    <property type="component" value="Chromosome"/>
</dbReference>
<dbReference type="GO" id="GO:0018189">
    <property type="term" value="P:pyrroloquinoline quinone biosynthetic process"/>
    <property type="evidence" value="ECO:0007669"/>
    <property type="project" value="UniProtKB-UniRule"/>
</dbReference>
<dbReference type="CDD" id="cd16274">
    <property type="entry name" value="PQQB-like_MBL-fold"/>
    <property type="match status" value="1"/>
</dbReference>
<dbReference type="Gene3D" id="3.60.15.10">
    <property type="entry name" value="Ribonuclease Z/Hydroxyacylglutathione hydrolase-like"/>
    <property type="match status" value="1"/>
</dbReference>
<dbReference type="HAMAP" id="MF_00653">
    <property type="entry name" value="PQQ_syn_PqqB"/>
    <property type="match status" value="1"/>
</dbReference>
<dbReference type="InterPro" id="IPR001279">
    <property type="entry name" value="Metallo-B-lactamas"/>
</dbReference>
<dbReference type="InterPro" id="IPR011842">
    <property type="entry name" value="PQQ_synth_PqqB"/>
</dbReference>
<dbReference type="InterPro" id="IPR036866">
    <property type="entry name" value="RibonucZ/Hydroxyglut_hydro"/>
</dbReference>
<dbReference type="NCBIfam" id="TIGR02108">
    <property type="entry name" value="PQQ_syn_pqqB"/>
    <property type="match status" value="1"/>
</dbReference>
<dbReference type="PANTHER" id="PTHR42663:SF7">
    <property type="entry name" value="COENZYME PQQ SYNTHESIS PROTEIN B"/>
    <property type="match status" value="1"/>
</dbReference>
<dbReference type="PANTHER" id="PTHR42663">
    <property type="entry name" value="HYDROLASE C777.06C-RELATED-RELATED"/>
    <property type="match status" value="1"/>
</dbReference>
<dbReference type="Pfam" id="PF12706">
    <property type="entry name" value="Lactamase_B_2"/>
    <property type="match status" value="1"/>
</dbReference>
<dbReference type="SUPFAM" id="SSF56281">
    <property type="entry name" value="Metallo-hydrolase/oxidoreductase"/>
    <property type="match status" value="1"/>
</dbReference>
<reference key="1">
    <citation type="journal article" date="2005" name="J. Bacteriol.">
        <title>Whole-genome sequence analysis of Pseudomonas syringae pv. phaseolicola 1448A reveals divergence among pathovars in genes involved in virulence and transposition.</title>
        <authorList>
            <person name="Joardar V."/>
            <person name="Lindeberg M."/>
            <person name="Jackson R.W."/>
            <person name="Selengut J."/>
            <person name="Dodson R."/>
            <person name="Brinkac L.M."/>
            <person name="Daugherty S.C."/>
            <person name="DeBoy R.T."/>
            <person name="Durkin A.S."/>
            <person name="Gwinn Giglio M."/>
            <person name="Madupu R."/>
            <person name="Nelson W.C."/>
            <person name="Rosovitz M.J."/>
            <person name="Sullivan S.A."/>
            <person name="Crabtree J."/>
            <person name="Creasy T."/>
            <person name="Davidsen T.M."/>
            <person name="Haft D.H."/>
            <person name="Zafar N."/>
            <person name="Zhou L."/>
            <person name="Halpin R."/>
            <person name="Holley T."/>
            <person name="Khouri H.M."/>
            <person name="Feldblyum T.V."/>
            <person name="White O."/>
            <person name="Fraser C.M."/>
            <person name="Chatterjee A.K."/>
            <person name="Cartinhour S."/>
            <person name="Schneider D."/>
            <person name="Mansfield J.W."/>
            <person name="Collmer A."/>
            <person name="Buell R."/>
        </authorList>
    </citation>
    <scope>NUCLEOTIDE SEQUENCE [LARGE SCALE GENOMIC DNA]</scope>
    <source>
        <strain>1448A / Race 6</strain>
    </source>
</reference>
<feature type="chain" id="PRO_1000061651" description="Coenzyme PQQ synthesis protein B">
    <location>
        <begin position="1"/>
        <end position="303"/>
    </location>
</feature>
<name>PQQB_PSE14</name>
<sequence>MYIQILGSAAGGGFPQWNCNCVNCAGFRDGSLRAQARTQSSIALSDDGINWVLCNASPDIRAQLQGFAPMQPGRALRDTGISAIVLMDSQIDHTTGLLSLREGCPHQVWCTEMVHEDLSTGFPLFEMLKHWNGGLTWNRIELQGSFVIPACPNLRFTPFPLRSAAPPYSPHRFDPHPGDNIGLLVEDTRTGGKLFYAPGLGKVDEALAEKMRDADCLLVDGTMWDDDEMQRRGVGTRTGREMGHLAQNGPGGMLEVLEGFPEQRKVLIHINNTNPILDEDSPERAELVRRNVEVAFDGMSIEL</sequence>
<comment type="function">
    <text evidence="1">May be involved in the transport of PQQ or its precursor to the periplasm.</text>
</comment>
<comment type="pathway">
    <text evidence="1">Cofactor biosynthesis; pyrroloquinoline quinone biosynthesis.</text>
</comment>
<comment type="similarity">
    <text evidence="1">Belongs to the PqqB family.</text>
</comment>
<protein>
    <recommendedName>
        <fullName evidence="1">Coenzyme PQQ synthesis protein B</fullName>
    </recommendedName>
    <alternativeName>
        <fullName evidence="1">Pyrroloquinoline quinone biosynthesis protein B</fullName>
    </alternativeName>
</protein>
<keyword id="KW-0884">PQQ biosynthesis</keyword>
<keyword id="KW-0813">Transport</keyword>
<accession>Q48CT6</accession>
<organism>
    <name type="scientific">Pseudomonas savastanoi pv. phaseolicola (strain 1448A / Race 6)</name>
    <name type="common">Pseudomonas syringae pv. phaseolicola (strain 1448A / Race 6)</name>
    <dbReference type="NCBI Taxonomy" id="264730"/>
    <lineage>
        <taxon>Bacteria</taxon>
        <taxon>Pseudomonadati</taxon>
        <taxon>Pseudomonadota</taxon>
        <taxon>Gammaproteobacteria</taxon>
        <taxon>Pseudomonadales</taxon>
        <taxon>Pseudomonadaceae</taxon>
        <taxon>Pseudomonas</taxon>
    </lineage>
</organism>